<gene>
    <name evidence="1" type="primary">kdpA</name>
    <name type="ordered locus">SARI_02235</name>
</gene>
<name>KDPA_SALAR</name>
<keyword id="KW-0997">Cell inner membrane</keyword>
<keyword id="KW-1003">Cell membrane</keyword>
<keyword id="KW-0406">Ion transport</keyword>
<keyword id="KW-0472">Membrane</keyword>
<keyword id="KW-0630">Potassium</keyword>
<keyword id="KW-0633">Potassium transport</keyword>
<keyword id="KW-1185">Reference proteome</keyword>
<keyword id="KW-0812">Transmembrane</keyword>
<keyword id="KW-1133">Transmembrane helix</keyword>
<keyword id="KW-0813">Transport</keyword>
<reference key="1">
    <citation type="submission" date="2007-11" db="EMBL/GenBank/DDBJ databases">
        <authorList>
            <consortium name="The Salmonella enterica serovar Arizonae Genome Sequencing Project"/>
            <person name="McClelland M."/>
            <person name="Sanderson E.K."/>
            <person name="Porwollik S."/>
            <person name="Spieth J."/>
            <person name="Clifton W.S."/>
            <person name="Fulton R."/>
            <person name="Chunyan W."/>
            <person name="Wollam A."/>
            <person name="Shah N."/>
            <person name="Pepin K."/>
            <person name="Bhonagiri V."/>
            <person name="Nash W."/>
            <person name="Johnson M."/>
            <person name="Thiruvilangam P."/>
            <person name="Wilson R."/>
        </authorList>
    </citation>
    <scope>NUCLEOTIDE SEQUENCE [LARGE SCALE GENOMIC DNA]</scope>
    <source>
        <strain>ATCC BAA-731 / CDC346-86 / RSK2980</strain>
    </source>
</reference>
<protein>
    <recommendedName>
        <fullName evidence="1">Potassium-transporting ATPase potassium-binding subunit</fullName>
    </recommendedName>
    <alternativeName>
        <fullName evidence="1">ATP phosphohydrolase [potassium-transporting] A chain</fullName>
    </alternativeName>
    <alternativeName>
        <fullName evidence="1">Potassium-binding and translocating subunit A</fullName>
    </alternativeName>
    <alternativeName>
        <fullName evidence="1">Potassium-translocating ATPase A chain</fullName>
    </alternativeName>
</protein>
<feature type="chain" id="PRO_1000078787" description="Potassium-transporting ATPase potassium-binding subunit">
    <location>
        <begin position="1"/>
        <end position="559"/>
    </location>
</feature>
<feature type="transmembrane region" description="Helical" evidence="1">
    <location>
        <begin position="7"/>
        <end position="27"/>
    </location>
</feature>
<feature type="transmembrane region" description="Helical" evidence="1">
    <location>
        <begin position="63"/>
        <end position="83"/>
    </location>
</feature>
<feature type="transmembrane region" description="Helical" evidence="1">
    <location>
        <begin position="132"/>
        <end position="152"/>
    </location>
</feature>
<feature type="transmembrane region" description="Helical" evidence="1">
    <location>
        <begin position="170"/>
        <end position="190"/>
    </location>
</feature>
<feature type="transmembrane region" description="Helical" evidence="1">
    <location>
        <begin position="253"/>
        <end position="273"/>
    </location>
</feature>
<feature type="transmembrane region" description="Helical" evidence="1">
    <location>
        <begin position="283"/>
        <end position="303"/>
    </location>
</feature>
<feature type="transmembrane region" description="Helical" evidence="1">
    <location>
        <begin position="327"/>
        <end position="347"/>
    </location>
</feature>
<feature type="transmembrane region" description="Helical" evidence="1">
    <location>
        <begin position="356"/>
        <end position="376"/>
    </location>
</feature>
<feature type="transmembrane region" description="Helical" evidence="1">
    <location>
        <begin position="379"/>
        <end position="399"/>
    </location>
</feature>
<feature type="transmembrane region" description="Helical" evidence="1">
    <location>
        <begin position="416"/>
        <end position="436"/>
    </location>
</feature>
<feature type="transmembrane region" description="Helical" evidence="1">
    <location>
        <begin position="484"/>
        <end position="504"/>
    </location>
</feature>
<feature type="transmembrane region" description="Helical" evidence="1">
    <location>
        <begin position="524"/>
        <end position="544"/>
    </location>
</feature>
<dbReference type="EMBL" id="CP000880">
    <property type="protein sequence ID" value="ABX22107.1"/>
    <property type="molecule type" value="Genomic_DNA"/>
</dbReference>
<dbReference type="SMR" id="A9MK88"/>
<dbReference type="STRING" id="41514.SARI_02235"/>
<dbReference type="KEGG" id="ses:SARI_02235"/>
<dbReference type="HOGENOM" id="CLU_018614_3_0_6"/>
<dbReference type="Proteomes" id="UP000002084">
    <property type="component" value="Chromosome"/>
</dbReference>
<dbReference type="GO" id="GO:0005886">
    <property type="term" value="C:plasma membrane"/>
    <property type="evidence" value="ECO:0007669"/>
    <property type="project" value="UniProtKB-SubCell"/>
</dbReference>
<dbReference type="GO" id="GO:0008556">
    <property type="term" value="F:P-type potassium transmembrane transporter activity"/>
    <property type="evidence" value="ECO:0007669"/>
    <property type="project" value="InterPro"/>
</dbReference>
<dbReference type="GO" id="GO:0030955">
    <property type="term" value="F:potassium ion binding"/>
    <property type="evidence" value="ECO:0007669"/>
    <property type="project" value="UniProtKB-UniRule"/>
</dbReference>
<dbReference type="HAMAP" id="MF_00275">
    <property type="entry name" value="KdpA"/>
    <property type="match status" value="1"/>
</dbReference>
<dbReference type="InterPro" id="IPR004623">
    <property type="entry name" value="KdpA"/>
</dbReference>
<dbReference type="NCBIfam" id="TIGR00680">
    <property type="entry name" value="kdpA"/>
    <property type="match status" value="1"/>
</dbReference>
<dbReference type="PANTHER" id="PTHR30607">
    <property type="entry name" value="POTASSIUM-TRANSPORTING ATPASE A CHAIN"/>
    <property type="match status" value="1"/>
</dbReference>
<dbReference type="PANTHER" id="PTHR30607:SF2">
    <property type="entry name" value="POTASSIUM-TRANSPORTING ATPASE POTASSIUM-BINDING SUBUNIT"/>
    <property type="match status" value="1"/>
</dbReference>
<dbReference type="Pfam" id="PF03814">
    <property type="entry name" value="KdpA"/>
    <property type="match status" value="1"/>
</dbReference>
<dbReference type="PIRSF" id="PIRSF001294">
    <property type="entry name" value="K_ATPaseA"/>
    <property type="match status" value="1"/>
</dbReference>
<accession>A9MK88</accession>
<sequence length="559" mass="59348">MAAQGSLLIASFLLILLVLAKPLGSGLARLIAASPLPGVAGVERVLWRTLGITGHEMNWRQYLLALLTLNLLGLSILFCLLFWQEWLPLNPQRLPGLSWDLALNTAVSFVTNTNWQAYSGESTLSYFSQMAGLTVQNFLSAATGIAVVFALIRAFTRQNMHTLGNAWQDLVRITLWILFPVALIIALFFIQQGVLQNLSAYQPITTLEGAQQLLPMGPVASQEAIKMLGTNGGGFFNANSSHPFENPTALTNMVQMLAIFLIPAALCFAFGEAAGDRRQGRALLWAMSFIFVVCVAVVMWAEVQGNPHLLTAGADSSVNMEGKETRFGVLASSLFAVVTTAASCGAVDAMHDSFTALGGMVPMWLMQIGEVVFGGVGSGLYGMLLFVLLAVFIAGLMIGRTPEYLGKKIDVREMKMTALAILVTPMLVLLGSALAMMTDAGRSAMLNPGPHGFSEVLYAVSSAANNNGSAFAGLSANSPFWNCLLAFCMFVGRFGVIIPVMAIAGSLVSKKAQPASQGTLATHGALFIGLLIGTVLLVGALTFIPALALGPVAEHFSLP</sequence>
<comment type="function">
    <text evidence="1">Part of the high-affinity ATP-driven potassium transport (or Kdp) system, which catalyzes the hydrolysis of ATP coupled with the electrogenic transport of potassium into the cytoplasm. This subunit binds the periplasmic potassium ions and delivers the ions to the membrane domain of KdpB through an intramembrane tunnel.</text>
</comment>
<comment type="subunit">
    <text evidence="1">The system is composed of three essential subunits: KdpA, KdpB and KdpC.</text>
</comment>
<comment type="subcellular location">
    <subcellularLocation>
        <location evidence="1">Cell inner membrane</location>
        <topology evidence="1">Multi-pass membrane protein</topology>
    </subcellularLocation>
</comment>
<comment type="similarity">
    <text evidence="1">Belongs to the KdpA family.</text>
</comment>
<evidence type="ECO:0000255" key="1">
    <source>
        <dbReference type="HAMAP-Rule" id="MF_00275"/>
    </source>
</evidence>
<proteinExistence type="inferred from homology"/>
<organism>
    <name type="scientific">Salmonella arizonae (strain ATCC BAA-731 / CDC346-86 / RSK2980)</name>
    <dbReference type="NCBI Taxonomy" id="41514"/>
    <lineage>
        <taxon>Bacteria</taxon>
        <taxon>Pseudomonadati</taxon>
        <taxon>Pseudomonadota</taxon>
        <taxon>Gammaproteobacteria</taxon>
        <taxon>Enterobacterales</taxon>
        <taxon>Enterobacteriaceae</taxon>
        <taxon>Salmonella</taxon>
    </lineage>
</organism>